<name>TAUB_RUEPO</name>
<proteinExistence type="inferred from homology"/>
<protein>
    <recommendedName>
        <fullName evidence="1">Taurine import ATP-binding protein TauB</fullName>
        <ecNumber evidence="1">7.6.2.7</ecNumber>
    </recommendedName>
</protein>
<evidence type="ECO:0000255" key="1">
    <source>
        <dbReference type="HAMAP-Rule" id="MF_01714"/>
    </source>
</evidence>
<accession>Q5LVM5</accession>
<sequence>MSGLSIENISMRFDLPNGSSVQALKNVSLHLKEGELMSVLGPSGCGKTTLLNIVAGFLAPTEGHIAMNGHKVHGPNAERGMVFQQGALFEWMNVRDNVSFGPRMKGQRASQYGSHVDHLLDVTGLGDFKDKAIYELSGGMQQRVALARCLANDPDVILMDEPLGALDALTREKMQGLVLKLWKETGKTIILITHSVEEALLLGERLLVMAPRPGRIHKEYRLPYADMGVNADLREVKKSEGYSQTREEILSMIWDMEEEIMGRTEAAQ</sequence>
<feature type="chain" id="PRO_0000093019" description="Taurine import ATP-binding protein TauB">
    <location>
        <begin position="1"/>
        <end position="268"/>
    </location>
</feature>
<feature type="domain" description="ABC transporter" evidence="1">
    <location>
        <begin position="4"/>
        <end position="236"/>
    </location>
</feature>
<feature type="binding site" evidence="1">
    <location>
        <begin position="41"/>
        <end position="48"/>
    </location>
    <ligand>
        <name>ATP</name>
        <dbReference type="ChEBI" id="CHEBI:30616"/>
    </ligand>
</feature>
<keyword id="KW-0067">ATP-binding</keyword>
<keyword id="KW-0997">Cell inner membrane</keyword>
<keyword id="KW-1003">Cell membrane</keyword>
<keyword id="KW-0472">Membrane</keyword>
<keyword id="KW-0547">Nucleotide-binding</keyword>
<keyword id="KW-1185">Reference proteome</keyword>
<keyword id="KW-1278">Translocase</keyword>
<keyword id="KW-0813">Transport</keyword>
<reference key="1">
    <citation type="journal article" date="2004" name="Nature">
        <title>Genome sequence of Silicibacter pomeroyi reveals adaptations to the marine environment.</title>
        <authorList>
            <person name="Moran M.A."/>
            <person name="Buchan A."/>
            <person name="Gonzalez J.M."/>
            <person name="Heidelberg J.F."/>
            <person name="Whitman W.B."/>
            <person name="Kiene R.P."/>
            <person name="Henriksen J.R."/>
            <person name="King G.M."/>
            <person name="Belas R."/>
            <person name="Fuqua C."/>
            <person name="Brinkac L.M."/>
            <person name="Lewis M."/>
            <person name="Johri S."/>
            <person name="Weaver B."/>
            <person name="Pai G."/>
            <person name="Eisen J.A."/>
            <person name="Rahe E."/>
            <person name="Sheldon W.M."/>
            <person name="Ye W."/>
            <person name="Miller T.R."/>
            <person name="Carlton J."/>
            <person name="Rasko D.A."/>
            <person name="Paulsen I.T."/>
            <person name="Ren Q."/>
            <person name="Daugherty S.C."/>
            <person name="DeBoy R.T."/>
            <person name="Dodson R.J."/>
            <person name="Durkin A.S."/>
            <person name="Madupu R."/>
            <person name="Nelson W.C."/>
            <person name="Sullivan S.A."/>
            <person name="Rosovitz M.J."/>
            <person name="Haft D.H."/>
            <person name="Selengut J."/>
            <person name="Ward N."/>
        </authorList>
    </citation>
    <scope>NUCLEOTIDE SEQUENCE [LARGE SCALE GENOMIC DNA]</scope>
    <source>
        <strain>ATCC 700808 / DSM 15171 / DSS-3</strain>
    </source>
</reference>
<reference key="2">
    <citation type="journal article" date="2014" name="Stand. Genomic Sci.">
        <title>An updated genome annotation for the model marine bacterium Ruegeria pomeroyi DSS-3.</title>
        <authorList>
            <person name="Rivers A.R."/>
            <person name="Smith C.B."/>
            <person name="Moran M.A."/>
        </authorList>
    </citation>
    <scope>GENOME REANNOTATION</scope>
    <source>
        <strain>ATCC 700808 / DSM 15171 / DSS-3</strain>
    </source>
</reference>
<gene>
    <name evidence="1" type="primary">tauB</name>
    <name type="ordered locus">SPO0675</name>
</gene>
<organism>
    <name type="scientific">Ruegeria pomeroyi (strain ATCC 700808 / DSM 15171 / DSS-3)</name>
    <name type="common">Silicibacter pomeroyi</name>
    <dbReference type="NCBI Taxonomy" id="246200"/>
    <lineage>
        <taxon>Bacteria</taxon>
        <taxon>Pseudomonadati</taxon>
        <taxon>Pseudomonadota</taxon>
        <taxon>Alphaproteobacteria</taxon>
        <taxon>Rhodobacterales</taxon>
        <taxon>Roseobacteraceae</taxon>
        <taxon>Ruegeria</taxon>
    </lineage>
</organism>
<dbReference type="EC" id="7.6.2.7" evidence="1"/>
<dbReference type="EMBL" id="CP000031">
    <property type="protein sequence ID" value="AAV93983.1"/>
    <property type="molecule type" value="Genomic_DNA"/>
</dbReference>
<dbReference type="RefSeq" id="WP_011046426.1">
    <property type="nucleotide sequence ID" value="NC_003911.12"/>
</dbReference>
<dbReference type="SMR" id="Q5LVM5"/>
<dbReference type="STRING" id="246200.SPO0675"/>
<dbReference type="PaxDb" id="246200-SPO0675"/>
<dbReference type="KEGG" id="sil:SPO0675"/>
<dbReference type="eggNOG" id="COG1116">
    <property type="taxonomic scope" value="Bacteria"/>
</dbReference>
<dbReference type="HOGENOM" id="CLU_000604_1_22_5"/>
<dbReference type="OrthoDB" id="9802264at2"/>
<dbReference type="Proteomes" id="UP000001023">
    <property type="component" value="Chromosome"/>
</dbReference>
<dbReference type="GO" id="GO:0005886">
    <property type="term" value="C:plasma membrane"/>
    <property type="evidence" value="ECO:0007669"/>
    <property type="project" value="UniProtKB-SubCell"/>
</dbReference>
<dbReference type="GO" id="GO:0015411">
    <property type="term" value="F:ABC-type taurine transporter transporter activity"/>
    <property type="evidence" value="ECO:0007669"/>
    <property type="project" value="UniProtKB-EC"/>
</dbReference>
<dbReference type="GO" id="GO:0005524">
    <property type="term" value="F:ATP binding"/>
    <property type="evidence" value="ECO:0007669"/>
    <property type="project" value="UniProtKB-KW"/>
</dbReference>
<dbReference type="GO" id="GO:0016887">
    <property type="term" value="F:ATP hydrolysis activity"/>
    <property type="evidence" value="ECO:0007669"/>
    <property type="project" value="InterPro"/>
</dbReference>
<dbReference type="CDD" id="cd03293">
    <property type="entry name" value="ABC_NrtD_SsuB_transporters"/>
    <property type="match status" value="1"/>
</dbReference>
<dbReference type="Gene3D" id="3.40.50.300">
    <property type="entry name" value="P-loop containing nucleotide triphosphate hydrolases"/>
    <property type="match status" value="1"/>
</dbReference>
<dbReference type="InterPro" id="IPR003593">
    <property type="entry name" value="AAA+_ATPase"/>
</dbReference>
<dbReference type="InterPro" id="IPR003439">
    <property type="entry name" value="ABC_transporter-like_ATP-bd"/>
</dbReference>
<dbReference type="InterPro" id="IPR017871">
    <property type="entry name" value="ABC_transporter-like_CS"/>
</dbReference>
<dbReference type="InterPro" id="IPR050166">
    <property type="entry name" value="ABC_transporter_ATP-bind"/>
</dbReference>
<dbReference type="InterPro" id="IPR027417">
    <property type="entry name" value="P-loop_NTPase"/>
</dbReference>
<dbReference type="PANTHER" id="PTHR42788:SF18">
    <property type="entry name" value="TAURINE IMPORT ATP-BINDING PROTEIN TAUB"/>
    <property type="match status" value="1"/>
</dbReference>
<dbReference type="PANTHER" id="PTHR42788">
    <property type="entry name" value="TAURINE IMPORT ATP-BINDING PROTEIN-RELATED"/>
    <property type="match status" value="1"/>
</dbReference>
<dbReference type="Pfam" id="PF00005">
    <property type="entry name" value="ABC_tran"/>
    <property type="match status" value="1"/>
</dbReference>
<dbReference type="SMART" id="SM00382">
    <property type="entry name" value="AAA"/>
    <property type="match status" value="1"/>
</dbReference>
<dbReference type="SUPFAM" id="SSF52540">
    <property type="entry name" value="P-loop containing nucleoside triphosphate hydrolases"/>
    <property type="match status" value="1"/>
</dbReference>
<dbReference type="PROSITE" id="PS00211">
    <property type="entry name" value="ABC_TRANSPORTER_1"/>
    <property type="match status" value="1"/>
</dbReference>
<dbReference type="PROSITE" id="PS50893">
    <property type="entry name" value="ABC_TRANSPORTER_2"/>
    <property type="match status" value="1"/>
</dbReference>
<dbReference type="PROSITE" id="PS51250">
    <property type="entry name" value="TAUB"/>
    <property type="match status" value="1"/>
</dbReference>
<comment type="function">
    <text evidence="1">Part of the ABC transporter complex TauABC involved in taurine import. Responsible for energy coupling to the transport system.</text>
</comment>
<comment type="catalytic activity">
    <reaction evidence="1">
        <text>taurine(out) + ATP + H2O = taurine(in) + ADP + phosphate + H(+)</text>
        <dbReference type="Rhea" id="RHEA:14613"/>
        <dbReference type="ChEBI" id="CHEBI:15377"/>
        <dbReference type="ChEBI" id="CHEBI:15378"/>
        <dbReference type="ChEBI" id="CHEBI:30616"/>
        <dbReference type="ChEBI" id="CHEBI:43474"/>
        <dbReference type="ChEBI" id="CHEBI:456216"/>
        <dbReference type="ChEBI" id="CHEBI:507393"/>
        <dbReference type="EC" id="7.6.2.7"/>
    </reaction>
</comment>
<comment type="subunit">
    <text evidence="1">The complex is composed of two ATP-binding proteins (TauB), two transmembrane proteins (TauC) and a solute-binding protein (TauA).</text>
</comment>
<comment type="subcellular location">
    <subcellularLocation>
        <location evidence="1">Cell inner membrane</location>
        <topology evidence="1">Peripheral membrane protein</topology>
    </subcellularLocation>
</comment>
<comment type="similarity">
    <text evidence="1">Belongs to the ABC transporter superfamily. Taurine importer (TC 3.A.1.17.1) family.</text>
</comment>